<protein>
    <recommendedName>
        <fullName evidence="1">Glyceraldehyde-3-phosphate dehydrogenase</fullName>
        <shortName evidence="1">GAPDH</shortName>
        <ecNumber evidence="1">1.2.1.12</ecNumber>
    </recommendedName>
    <alternativeName>
        <fullName evidence="1">NAD-dependent glyceraldehyde-3-phosphate dehydrogenase</fullName>
    </alternativeName>
</protein>
<name>G3P_BUCAP</name>
<accession>Q07234</accession>
<proteinExistence type="inferred from homology"/>
<gene>
    <name type="primary">gapA</name>
    <name type="ordered locus">BUsg_287</name>
</gene>
<sequence length="332" mass="36484">MTIKIGINGFGRIGRVLFRLAQERENIEVVAINDLLDPKYIAYMLKYDSTHGNFKKDIEVKNNNLIINGKKIRITSIKDPEKLMWDKLLIDVVIESTGLFLTKDTAYKHILSGAKKVVITGPSKDDIPMFVRGANFDKYKGEKIVSNASCTTNCLAPLSKVIDDHFGIIEGLMTTVHASTATQKIVDSASKKDWRGGRGALQNIIPSSTGAAVAVGKVLPNLNGKLTGIAFRVPTANVSVVDLTVRYKKTATYNEICEVVKNASEQKMKGILGYTEDEVVSTDFNGKELTSIFDAKAGLSLNKNFAKLISWYDNETGYSSKVLDLVELVALK</sequence>
<comment type="function">
    <text evidence="1">Catalyzes the oxidative phosphorylation of glyceraldehyde 3-phosphate (G3P) to 1,3-bisphosphoglycerate (BPG) using the cofactor NAD. The first reaction step involves the formation of a hemiacetal intermediate between G3P and a cysteine residue, and this hemiacetal intermediate is then oxidized to a thioester, with concomitant reduction of NAD to NADH. The reduced NADH is then exchanged with the second NAD, and the thioester is attacked by a nucleophilic inorganic phosphate to produce BPG.</text>
</comment>
<comment type="catalytic activity">
    <reaction evidence="1">
        <text>D-glyceraldehyde 3-phosphate + phosphate + NAD(+) = (2R)-3-phospho-glyceroyl phosphate + NADH + H(+)</text>
        <dbReference type="Rhea" id="RHEA:10300"/>
        <dbReference type="ChEBI" id="CHEBI:15378"/>
        <dbReference type="ChEBI" id="CHEBI:43474"/>
        <dbReference type="ChEBI" id="CHEBI:57540"/>
        <dbReference type="ChEBI" id="CHEBI:57604"/>
        <dbReference type="ChEBI" id="CHEBI:57945"/>
        <dbReference type="ChEBI" id="CHEBI:59776"/>
        <dbReference type="EC" id="1.2.1.12"/>
    </reaction>
</comment>
<comment type="pathway">
    <text evidence="2">Carbohydrate degradation; glycolysis; pyruvate from D-glyceraldehyde 3-phosphate: step 1/5.</text>
</comment>
<comment type="subunit">
    <text evidence="1">Homotetramer.</text>
</comment>
<comment type="subcellular location">
    <subcellularLocation>
        <location evidence="2">Cytoplasm</location>
    </subcellularLocation>
</comment>
<comment type="similarity">
    <text evidence="2">Belongs to the glyceraldehyde-3-phosphate dehydrogenase family.</text>
</comment>
<reference key="1">
    <citation type="journal article" date="1995" name="Curr. Microbiol.">
        <title>Buchnera aphidicola (aphid-endosymbiont) glyceraldehyde-3-phosphate dehydrogenase: molecular cloning and sequence analysis.</title>
        <authorList>
            <person name="Kolibachuk D."/>
            <person name="Baumann P."/>
        </authorList>
    </citation>
    <scope>NUCLEOTIDE SEQUENCE [GENOMIC DNA]</scope>
</reference>
<reference key="2">
    <citation type="journal article" date="2002" name="Science">
        <title>50 million years of genomic stasis in endosymbiotic bacteria.</title>
        <authorList>
            <person name="Tamas I."/>
            <person name="Klasson L."/>
            <person name="Canbaeck B."/>
            <person name="Naeslund A.K."/>
            <person name="Eriksson A.-S."/>
            <person name="Wernegreen J.J."/>
            <person name="Sandstroem J.P."/>
            <person name="Moran N.A."/>
            <person name="Andersson S.G.E."/>
        </authorList>
    </citation>
    <scope>NUCLEOTIDE SEQUENCE [LARGE SCALE GENOMIC DNA]</scope>
    <source>
        <strain>Sg</strain>
    </source>
</reference>
<reference key="3">
    <citation type="journal article" date="1993" name="Curr. Microbiol.">
        <title>Aspects of energy-yielding metabolism in the aphid, Schizaphis graminum, and its endosymbiont: detection of gene fragments potentially coding for the ATP synthase beta-subunit and glyceraldehyde-3-phosphate dehydrogenase.</title>
        <authorList>
            <person name="Clark M.A."/>
            <person name="Baumann P."/>
        </authorList>
    </citation>
    <scope>NUCLEOTIDE SEQUENCE [GENOMIC DNA] OF 118-170</scope>
</reference>
<organism>
    <name type="scientific">Buchnera aphidicola subsp. Schizaphis graminum (strain Sg)</name>
    <dbReference type="NCBI Taxonomy" id="198804"/>
    <lineage>
        <taxon>Bacteria</taxon>
        <taxon>Pseudomonadati</taxon>
        <taxon>Pseudomonadota</taxon>
        <taxon>Gammaproteobacteria</taxon>
        <taxon>Enterobacterales</taxon>
        <taxon>Erwiniaceae</taxon>
        <taxon>Buchnera</taxon>
    </lineage>
</organism>
<keyword id="KW-0963">Cytoplasm</keyword>
<keyword id="KW-0324">Glycolysis</keyword>
<keyword id="KW-0520">NAD</keyword>
<keyword id="KW-0547">Nucleotide-binding</keyword>
<keyword id="KW-0560">Oxidoreductase</keyword>
<evidence type="ECO:0000250" key="1">
    <source>
        <dbReference type="UniProtKB" id="P0A9B2"/>
    </source>
</evidence>
<evidence type="ECO:0000305" key="2"/>
<feature type="chain" id="PRO_0000145639" description="Glyceraldehyde-3-phosphate dehydrogenase">
    <location>
        <begin position="1"/>
        <end position="332"/>
    </location>
</feature>
<feature type="active site" description="Nucleophile" evidence="1">
    <location>
        <position position="150"/>
    </location>
</feature>
<feature type="binding site" evidence="1">
    <location>
        <begin position="12"/>
        <end position="13"/>
    </location>
    <ligand>
        <name>NAD(+)</name>
        <dbReference type="ChEBI" id="CHEBI:57540"/>
    </ligand>
</feature>
<feature type="binding site" evidence="1">
    <location>
        <position position="34"/>
    </location>
    <ligand>
        <name>NAD(+)</name>
        <dbReference type="ChEBI" id="CHEBI:57540"/>
    </ligand>
</feature>
<feature type="binding site" evidence="1">
    <location>
        <position position="78"/>
    </location>
    <ligand>
        <name>NAD(+)</name>
        <dbReference type="ChEBI" id="CHEBI:57540"/>
    </ligand>
</feature>
<feature type="binding site" evidence="1">
    <location>
        <position position="120"/>
    </location>
    <ligand>
        <name>NAD(+)</name>
        <dbReference type="ChEBI" id="CHEBI:57540"/>
    </ligand>
</feature>
<feature type="binding site" evidence="1">
    <location>
        <begin position="149"/>
        <end position="151"/>
    </location>
    <ligand>
        <name>D-glyceraldehyde 3-phosphate</name>
        <dbReference type="ChEBI" id="CHEBI:59776"/>
    </ligand>
</feature>
<feature type="binding site" evidence="1">
    <location>
        <position position="180"/>
    </location>
    <ligand>
        <name>D-glyceraldehyde 3-phosphate</name>
        <dbReference type="ChEBI" id="CHEBI:59776"/>
    </ligand>
</feature>
<feature type="binding site" evidence="1">
    <location>
        <begin position="209"/>
        <end position="210"/>
    </location>
    <ligand>
        <name>D-glyceraldehyde 3-phosphate</name>
        <dbReference type="ChEBI" id="CHEBI:59776"/>
    </ligand>
</feature>
<feature type="binding site" evidence="1">
    <location>
        <position position="232"/>
    </location>
    <ligand>
        <name>D-glyceraldehyde 3-phosphate</name>
        <dbReference type="ChEBI" id="CHEBI:59776"/>
    </ligand>
</feature>
<feature type="binding site" evidence="1">
    <location>
        <position position="314"/>
    </location>
    <ligand>
        <name>NAD(+)</name>
        <dbReference type="ChEBI" id="CHEBI:57540"/>
    </ligand>
</feature>
<feature type="site" description="Activates thiol group during catalysis" evidence="1">
    <location>
        <position position="177"/>
    </location>
</feature>
<dbReference type="EC" id="1.2.1.12" evidence="1"/>
<dbReference type="EMBL" id="U11045">
    <property type="protein sequence ID" value="AAC05798.1"/>
    <property type="molecule type" value="Genomic_DNA"/>
</dbReference>
<dbReference type="EMBL" id="AE013218">
    <property type="protein sequence ID" value="AAM67843.1"/>
    <property type="molecule type" value="Genomic_DNA"/>
</dbReference>
<dbReference type="EMBL" id="Z15146">
    <property type="protein sequence ID" value="CAA78852.1"/>
    <property type="molecule type" value="Genomic_DNA"/>
</dbReference>
<dbReference type="PIR" id="I40069">
    <property type="entry name" value="I40069"/>
</dbReference>
<dbReference type="RefSeq" id="WP_011053810.1">
    <property type="nucleotide sequence ID" value="NC_004061.1"/>
</dbReference>
<dbReference type="SMR" id="Q07234"/>
<dbReference type="STRING" id="198804.BUsg_287"/>
<dbReference type="GeneID" id="93003757"/>
<dbReference type="KEGG" id="bas:BUsg_287"/>
<dbReference type="eggNOG" id="COG0057">
    <property type="taxonomic scope" value="Bacteria"/>
</dbReference>
<dbReference type="HOGENOM" id="CLU_030140_0_3_6"/>
<dbReference type="UniPathway" id="UPA00109">
    <property type="reaction ID" value="UER00184"/>
</dbReference>
<dbReference type="Proteomes" id="UP000000416">
    <property type="component" value="Chromosome"/>
</dbReference>
<dbReference type="GO" id="GO:0005737">
    <property type="term" value="C:cytoplasm"/>
    <property type="evidence" value="ECO:0007669"/>
    <property type="project" value="UniProtKB-SubCell"/>
</dbReference>
<dbReference type="GO" id="GO:0004365">
    <property type="term" value="F:glyceraldehyde-3-phosphate dehydrogenase (NAD+) (phosphorylating) activity"/>
    <property type="evidence" value="ECO:0000250"/>
    <property type="project" value="UniProtKB"/>
</dbReference>
<dbReference type="GO" id="GO:0051287">
    <property type="term" value="F:NAD binding"/>
    <property type="evidence" value="ECO:0000250"/>
    <property type="project" value="UniProtKB"/>
</dbReference>
<dbReference type="GO" id="GO:0050661">
    <property type="term" value="F:NADP binding"/>
    <property type="evidence" value="ECO:0007669"/>
    <property type="project" value="InterPro"/>
</dbReference>
<dbReference type="GO" id="GO:0006006">
    <property type="term" value="P:glucose metabolic process"/>
    <property type="evidence" value="ECO:0007669"/>
    <property type="project" value="InterPro"/>
</dbReference>
<dbReference type="GO" id="GO:0006096">
    <property type="term" value="P:glycolytic process"/>
    <property type="evidence" value="ECO:0007669"/>
    <property type="project" value="UniProtKB-UniPathway"/>
</dbReference>
<dbReference type="CDD" id="cd18126">
    <property type="entry name" value="GAPDH_I_C"/>
    <property type="match status" value="1"/>
</dbReference>
<dbReference type="CDD" id="cd05214">
    <property type="entry name" value="GAPDH_I_N"/>
    <property type="match status" value="1"/>
</dbReference>
<dbReference type="FunFam" id="3.30.360.10:FF:000001">
    <property type="entry name" value="Glyceraldehyde-3-phosphate dehydrogenase"/>
    <property type="match status" value="1"/>
</dbReference>
<dbReference type="FunFam" id="3.40.50.720:FF:000001">
    <property type="entry name" value="Glyceraldehyde-3-phosphate dehydrogenase"/>
    <property type="match status" value="1"/>
</dbReference>
<dbReference type="Gene3D" id="3.30.360.10">
    <property type="entry name" value="Dihydrodipicolinate Reductase, domain 2"/>
    <property type="match status" value="1"/>
</dbReference>
<dbReference type="Gene3D" id="3.40.50.720">
    <property type="entry name" value="NAD(P)-binding Rossmann-like Domain"/>
    <property type="match status" value="1"/>
</dbReference>
<dbReference type="InterPro" id="IPR020831">
    <property type="entry name" value="GlycerAld/Erythrose_P_DH"/>
</dbReference>
<dbReference type="InterPro" id="IPR020830">
    <property type="entry name" value="GlycerAld_3-P_DH_AS"/>
</dbReference>
<dbReference type="InterPro" id="IPR020829">
    <property type="entry name" value="GlycerAld_3-P_DH_cat"/>
</dbReference>
<dbReference type="InterPro" id="IPR020828">
    <property type="entry name" value="GlycerAld_3-P_DH_NAD(P)-bd"/>
</dbReference>
<dbReference type="InterPro" id="IPR006424">
    <property type="entry name" value="Glyceraldehyde-3-P_DH_1"/>
</dbReference>
<dbReference type="InterPro" id="IPR036291">
    <property type="entry name" value="NAD(P)-bd_dom_sf"/>
</dbReference>
<dbReference type="NCBIfam" id="TIGR01534">
    <property type="entry name" value="GAPDH-I"/>
    <property type="match status" value="1"/>
</dbReference>
<dbReference type="PANTHER" id="PTHR10836">
    <property type="entry name" value="GLYCERALDEHYDE 3-PHOSPHATE DEHYDROGENASE"/>
    <property type="match status" value="1"/>
</dbReference>
<dbReference type="PANTHER" id="PTHR10836:SF76">
    <property type="entry name" value="GLYCERALDEHYDE-3-PHOSPHATE DEHYDROGENASE-RELATED"/>
    <property type="match status" value="1"/>
</dbReference>
<dbReference type="Pfam" id="PF02800">
    <property type="entry name" value="Gp_dh_C"/>
    <property type="match status" value="1"/>
</dbReference>
<dbReference type="Pfam" id="PF00044">
    <property type="entry name" value="Gp_dh_N"/>
    <property type="match status" value="1"/>
</dbReference>
<dbReference type="PIRSF" id="PIRSF000149">
    <property type="entry name" value="GAP_DH"/>
    <property type="match status" value="1"/>
</dbReference>
<dbReference type="PRINTS" id="PR00078">
    <property type="entry name" value="G3PDHDRGNASE"/>
</dbReference>
<dbReference type="SMART" id="SM00846">
    <property type="entry name" value="Gp_dh_N"/>
    <property type="match status" value="1"/>
</dbReference>
<dbReference type="SUPFAM" id="SSF55347">
    <property type="entry name" value="Glyceraldehyde-3-phosphate dehydrogenase-like, C-terminal domain"/>
    <property type="match status" value="1"/>
</dbReference>
<dbReference type="SUPFAM" id="SSF51735">
    <property type="entry name" value="NAD(P)-binding Rossmann-fold domains"/>
    <property type="match status" value="1"/>
</dbReference>
<dbReference type="PROSITE" id="PS00071">
    <property type="entry name" value="GAPDH"/>
    <property type="match status" value="1"/>
</dbReference>